<evidence type="ECO:0000255" key="1">
    <source>
        <dbReference type="HAMAP-Rule" id="MF_01838"/>
    </source>
</evidence>
<proteinExistence type="inferred from homology"/>
<gene>
    <name evidence="1" type="primary">fabV</name>
    <name type="ordered locus">BMA10229_A0467</name>
</gene>
<comment type="function">
    <text evidence="1">Involved in the final reduction of the elongation cycle of fatty acid synthesis (FAS II). Catalyzes the reduction of a carbon-carbon double bond in an enoyl moiety that is covalently linked to an acyl carrier protein (ACP).</text>
</comment>
<comment type="catalytic activity">
    <reaction evidence="1">
        <text>a 2,3-saturated acyl-[ACP] + NAD(+) = a (2E)-enoyl-[ACP] + NADH + H(+)</text>
        <dbReference type="Rhea" id="RHEA:10240"/>
        <dbReference type="Rhea" id="RHEA-COMP:9925"/>
        <dbReference type="Rhea" id="RHEA-COMP:9926"/>
        <dbReference type="ChEBI" id="CHEBI:15378"/>
        <dbReference type="ChEBI" id="CHEBI:57540"/>
        <dbReference type="ChEBI" id="CHEBI:57945"/>
        <dbReference type="ChEBI" id="CHEBI:78784"/>
        <dbReference type="ChEBI" id="CHEBI:78785"/>
        <dbReference type="EC" id="1.3.1.9"/>
    </reaction>
</comment>
<comment type="pathway">
    <text evidence="1">Lipid metabolism; fatty acid biosynthesis.</text>
</comment>
<comment type="subunit">
    <text evidence="1">Monomer.</text>
</comment>
<comment type="similarity">
    <text evidence="1">Belongs to the TER reductase family.</text>
</comment>
<reference key="1">
    <citation type="journal article" date="2010" name="Genome Biol. Evol.">
        <title>Continuing evolution of Burkholderia mallei through genome reduction and large-scale rearrangements.</title>
        <authorList>
            <person name="Losada L."/>
            <person name="Ronning C.M."/>
            <person name="DeShazer D."/>
            <person name="Woods D."/>
            <person name="Fedorova N."/>
            <person name="Kim H.S."/>
            <person name="Shabalina S.A."/>
            <person name="Pearson T.R."/>
            <person name="Brinkac L."/>
            <person name="Tan P."/>
            <person name="Nandi T."/>
            <person name="Crabtree J."/>
            <person name="Badger J."/>
            <person name="Beckstrom-Sternberg S."/>
            <person name="Saqib M."/>
            <person name="Schutzer S.E."/>
            <person name="Keim P."/>
            <person name="Nierman W.C."/>
        </authorList>
    </citation>
    <scope>NUCLEOTIDE SEQUENCE [LARGE SCALE GENOMIC DNA]</scope>
    <source>
        <strain>NCTC 10229</strain>
    </source>
</reference>
<keyword id="KW-0275">Fatty acid biosynthesis</keyword>
<keyword id="KW-0276">Fatty acid metabolism</keyword>
<keyword id="KW-0444">Lipid biosynthesis</keyword>
<keyword id="KW-0443">Lipid metabolism</keyword>
<keyword id="KW-0520">NAD</keyword>
<keyword id="KW-0560">Oxidoreductase</keyword>
<dbReference type="EC" id="1.3.1.9" evidence="1"/>
<dbReference type="EMBL" id="CP000546">
    <property type="protein sequence ID" value="ABN02540.1"/>
    <property type="molecule type" value="Genomic_DNA"/>
</dbReference>
<dbReference type="RefSeq" id="WP_004266854.1">
    <property type="nucleotide sequence ID" value="NC_008836.1"/>
</dbReference>
<dbReference type="SMR" id="A2S3E6"/>
<dbReference type="KEGG" id="bml:BMA10229_A0467"/>
<dbReference type="HOGENOM" id="CLU_057698_1_0_4"/>
<dbReference type="UniPathway" id="UPA00094"/>
<dbReference type="Proteomes" id="UP000002283">
    <property type="component" value="Chromosome I"/>
</dbReference>
<dbReference type="GO" id="GO:0004318">
    <property type="term" value="F:enoyl-[acyl-carrier-protein] reductase (NADH) activity"/>
    <property type="evidence" value="ECO:0007669"/>
    <property type="project" value="UniProtKB-UniRule"/>
</dbReference>
<dbReference type="GO" id="GO:0051287">
    <property type="term" value="F:NAD binding"/>
    <property type="evidence" value="ECO:0007669"/>
    <property type="project" value="UniProtKB-UniRule"/>
</dbReference>
<dbReference type="GO" id="GO:0050343">
    <property type="term" value="F:trans-2-enoyl-CoA reductase (NADH) activity"/>
    <property type="evidence" value="ECO:0007669"/>
    <property type="project" value="TreeGrafter"/>
</dbReference>
<dbReference type="GO" id="GO:0006633">
    <property type="term" value="P:fatty acid biosynthetic process"/>
    <property type="evidence" value="ECO:0007669"/>
    <property type="project" value="UniProtKB-UniRule"/>
</dbReference>
<dbReference type="FunFam" id="3.40.50.720:FF:000221">
    <property type="entry name" value="Enoyl-[acyl-carrier-protein] reductase [NADH]"/>
    <property type="match status" value="1"/>
</dbReference>
<dbReference type="Gene3D" id="3.40.50.720">
    <property type="entry name" value="NAD(P)-binding Rossmann-like Domain"/>
    <property type="match status" value="1"/>
</dbReference>
<dbReference type="HAMAP" id="MF_01838">
    <property type="entry name" value="FabV_reductase"/>
    <property type="match status" value="1"/>
</dbReference>
<dbReference type="InterPro" id="IPR024906">
    <property type="entry name" value="Eno_Rdtase_FAD-bd_dom"/>
</dbReference>
<dbReference type="InterPro" id="IPR024910">
    <property type="entry name" value="Enoyl-CoA_Rdtase_cat_dom"/>
</dbReference>
<dbReference type="InterPro" id="IPR050048">
    <property type="entry name" value="FabV-like_NADH_b"/>
</dbReference>
<dbReference type="InterPro" id="IPR010758">
    <property type="entry name" value="Trans-2-enoyl-CoA_reductase"/>
</dbReference>
<dbReference type="NCBIfam" id="NF043048">
    <property type="entry name" value="EnoyACPredFabV"/>
    <property type="match status" value="1"/>
</dbReference>
<dbReference type="NCBIfam" id="NF010177">
    <property type="entry name" value="PRK13656.1"/>
    <property type="match status" value="1"/>
</dbReference>
<dbReference type="PANTHER" id="PTHR37480">
    <property type="entry name" value="ENOYL-[ACYL-CARRIER-PROTEIN] REDUCTASE [NADH]"/>
    <property type="match status" value="1"/>
</dbReference>
<dbReference type="PANTHER" id="PTHR37480:SF1">
    <property type="entry name" value="ENOYL-[ACYL-CARRIER-PROTEIN] REDUCTASE [NADH]"/>
    <property type="match status" value="1"/>
</dbReference>
<dbReference type="Pfam" id="PF07055">
    <property type="entry name" value="Eno-Rase_FAD_bd"/>
    <property type="match status" value="1"/>
</dbReference>
<dbReference type="Pfam" id="PF12242">
    <property type="entry name" value="Eno-Rase_NADH_b"/>
    <property type="match status" value="1"/>
</dbReference>
<dbReference type="Pfam" id="PF12241">
    <property type="entry name" value="Enoyl_reductase"/>
    <property type="match status" value="1"/>
</dbReference>
<name>FABV_BURM9</name>
<feature type="chain" id="PRO_1000070470" description="Enoyl-[acyl-carrier-protein] reductase [NADH]">
    <location>
        <begin position="1"/>
        <end position="397"/>
    </location>
</feature>
<feature type="active site" description="Proton donor" evidence="1">
    <location>
        <position position="235"/>
    </location>
</feature>
<feature type="binding site" evidence="1">
    <location>
        <begin position="48"/>
        <end position="53"/>
    </location>
    <ligand>
        <name>NAD(+)</name>
        <dbReference type="ChEBI" id="CHEBI:57540"/>
    </ligand>
</feature>
<feature type="binding site" evidence="1">
    <location>
        <begin position="74"/>
        <end position="75"/>
    </location>
    <ligand>
        <name>NAD(+)</name>
        <dbReference type="ChEBI" id="CHEBI:57540"/>
    </ligand>
</feature>
<feature type="binding site" evidence="1">
    <location>
        <begin position="111"/>
        <end position="112"/>
    </location>
    <ligand>
        <name>NAD(+)</name>
        <dbReference type="ChEBI" id="CHEBI:57540"/>
    </ligand>
</feature>
<feature type="binding site" evidence="1">
    <location>
        <begin position="139"/>
        <end position="140"/>
    </location>
    <ligand>
        <name>NAD(+)</name>
        <dbReference type="ChEBI" id="CHEBI:57540"/>
    </ligand>
</feature>
<feature type="binding site" evidence="1">
    <location>
        <position position="225"/>
    </location>
    <ligand>
        <name>substrate</name>
    </ligand>
</feature>
<feature type="binding site" evidence="1">
    <location>
        <position position="244"/>
    </location>
    <ligand>
        <name>NAD(+)</name>
        <dbReference type="ChEBI" id="CHEBI:57540"/>
    </ligand>
</feature>
<feature type="binding site" evidence="1">
    <location>
        <begin position="273"/>
        <end position="275"/>
    </location>
    <ligand>
        <name>NAD(+)</name>
        <dbReference type="ChEBI" id="CHEBI:57540"/>
    </ligand>
</feature>
<feature type="site" description="Plays an important role in discriminating NADH against NADPH" evidence="1">
    <location>
        <position position="75"/>
    </location>
</feature>
<accession>A2S3E6</accession>
<organism>
    <name type="scientific">Burkholderia mallei (strain NCTC 10229)</name>
    <dbReference type="NCBI Taxonomy" id="412022"/>
    <lineage>
        <taxon>Bacteria</taxon>
        <taxon>Pseudomonadati</taxon>
        <taxon>Pseudomonadota</taxon>
        <taxon>Betaproteobacteria</taxon>
        <taxon>Burkholderiales</taxon>
        <taxon>Burkholderiaceae</taxon>
        <taxon>Burkholderia</taxon>
        <taxon>pseudomallei group</taxon>
    </lineage>
</organism>
<sequence length="397" mass="42832">MIIKPRVRGFICVTTHPAGCAASVREQIAYVARRGPIERGPKKVLVIGASTGYGLAARIAAAFGVGAATLGVFFERAPADAKPGTAGWYNSAAFHDEAAARGLQATSVNGDAFSDEIKHKTIDAIRRDLGQVDLVVYSVAAPRRTHPKTGVTHQSTLKPIGHAVRLRGIDTDNEAIKETLLQPATPDEIADTVAVMGGEDWRMWIDALDAAGVLADGAKTTAFTYLGEQVTHDIYWNGSIGEAKKDLDRTVLALRGKLAARGGDARVSVLKAVVTQASSAIPMMPLYLSLLFKVMKARSTHEGCIEQVDGLLRDSLYSAQPHVDAEGRLRADRLELDPAVQARVLELWDQVTDDNLYTLTDFAGYKAEFLRLFGFGIDGVDYDAPVEPNVRIPNLIE</sequence>
<protein>
    <recommendedName>
        <fullName evidence="1">Enoyl-[acyl-carrier-protein] reductase [NADH]</fullName>
        <shortName evidence="1">ENR</shortName>
        <ecNumber evidence="1">1.3.1.9</ecNumber>
    </recommendedName>
</protein>